<protein>
    <recommendedName>
        <fullName>Interleukin-17F</fullName>
        <shortName>IL-17F</shortName>
    </recommendedName>
    <alternativeName>
        <fullName>Cytokine ML-1</fullName>
    </alternativeName>
</protein>
<accession>Q96PD4</accession>
<accession>Q6NSI0</accession>
<accession>Q7Z6P4</accession>
<accession>Q96PI8</accession>
<accession>Q9NUE6</accession>
<comment type="function">
    <text evidence="1 2 3 4 8 9 11 12 13">Effector cytokine of innate and adaptive immune system involved in antimicrobial host defense and maintenance of tissue integrity (PubMed:21350122). IL17A-IL17F signals via IL17RA-IL17RC heterodimeric receptor complex, triggering homotypic interaction of IL17RA and IL17RC chains with TRAF3IP2 adapter through SEFIR domains. This leads to downstream TRAF6-mediated activation of NF-kappa-B and MAPkinase pathways ultimately resulting in transcriptional activation of cytokines, chemokines, antimicrobial peptides and matrix metalloproteinases, with potential strong immune inflammation (PubMed:11574464, PubMed:11591732, PubMed:11591768, PubMed:17911633, PubMed:18684971, PubMed:21350122, PubMed:28827714). IL17A-IL17F is primarily involved in host defense against extracellular bacteria and fungi by inducing neutrophilic inflammation (By similarity). As signature effector cytokine of T-helper 17 cells (Th17), primarily induces neutrophil activation and recruitment at infection and inflammatory sites (By similarity). Stimulates the production of antimicrobial beta-defensins DEFB1, DEFB103A, and DEFB104A by mucosal epithelial cells, limiting the entry of microbes through the epithelial barriers (By similarity). IL17F homodimer can signal via IL17RC homodimeric receptor complex, triggering downstream activation of TRAF6 and NF-kappa-B signaling pathway (PubMed:32187518). Via IL17RC induces transcriptional activation of IL33, a potent cytokine that stimulates group 2 innate lymphoid cells and adaptive T-helper 2 cells involved in pulmonary allergic response to fungi. Likely via IL17RC, promotes sympathetic innervation of peripheral organs by coordinating the communication between gamma-delta T cells and parenchymal cells. Stimulates sympathetic innervation of thermogenic adipose tissue by driving TGFB1 expression (By similarity). Regulates the composition of intestinal microbiota and immune tolerance by inducing antimicrobial proteins that specifically control the growth of commensal Firmicutes and Bacteroidetes (By similarity).</text>
</comment>
<comment type="subunit">
    <text evidence="7 8 9 10 12 13">Homodimer; disulfide-linked (PubMed:19838198, PubMed:32187518). Heterodimer with IL17A (IL17A-IL17F) (PubMed:17355969). Forms complexes with IL17RA and IL17RC receptors with 2:1 binding stoichiometry: two receptor chains for one interleukin molecule. IL17F homodimer forms predominantly complexes with IL17RC homodimer, whereas IL17A-IL17F favors complexes with IL17RA-IL17RC (PubMed:17911633, PubMed:18684971, PubMed:28827714, PubMed:32187518). IL17RA and IL17RC chains cannot distinguish between IL17A and IL17F molecules, potentially enabling the formation of topologically distinct complexes (PubMed:28827714).</text>
</comment>
<comment type="interaction">
    <interactant intactId="EBI-10292310">
        <id>Q96PD4</id>
    </interactant>
    <interactant intactId="EBI-10172181">
        <id>Q53SE7</id>
        <label>FLJ13057</label>
    </interactant>
    <organismsDiffer>false</organismsDiffer>
    <experiments>3</experiments>
</comment>
<comment type="subcellular location">
    <subcellularLocation>
        <location evidence="1">Secreted</location>
    </subcellularLocation>
</comment>
<comment type="tissue specificity">
    <text evidence="4">Expressed in T-helper 1 and T-helper 2 cells, basophils and mast cells.</text>
</comment>
<comment type="disease" evidence="11">
    <disease id="DI-03125">
        <name>Candidiasis, familial, 6</name>
        <acronym>CANDF6</acronym>
        <description>A primary immunodeficiency disorder with altered immune responses and impaired clearance of fungal infections, selective against Candida. It is characterized by persistent and/or recurrent infections of the skin, nails and mucous membranes caused by organisms of the genus Candida, mainly Candida albicans.</description>
        <dbReference type="MIM" id="613956"/>
    </disease>
    <text>The disease is caused by variants affecting the gene represented in this entry.</text>
</comment>
<comment type="similarity">
    <text evidence="14">Belongs to the IL-17 family.</text>
</comment>
<comment type="sequence caution" evidence="14">
    <conflict type="miscellaneous discrepancy">
        <sequence resource="EMBL-CDS" id="AAL14427"/>
    </conflict>
    <text>Intron retention.</text>
</comment>
<comment type="online information" name="Wikipedia">
    <link uri="https://en.wikipedia.org/wiki/Interleukin_17"/>
    <text>Interleukin-17 entry</text>
</comment>
<reference key="1">
    <citation type="journal article" date="2001" name="J. Immunol.">
        <title>IL-17F, a novel cytokine selectively expressed in activated T cells and monocytes, regulates angiogenesis and endothelial cell cytokine production.</title>
        <authorList>
            <person name="Starnes T."/>
            <person name="Robertson M.J."/>
            <person name="Sledge G."/>
            <person name="Kelich S."/>
            <person name="Nakshatri H."/>
            <person name="Broxmeyer H.E."/>
            <person name="Hromas R."/>
        </authorList>
    </citation>
    <scope>NUCLEOTIDE SEQUENCE [MRNA]</scope>
    <scope>FUNCTION</scope>
</reference>
<reference key="2">
    <citation type="journal article" date="2003" name="Nature">
        <title>The DNA sequence and analysis of human chromosome 6.</title>
        <authorList>
            <person name="Mungall A.J."/>
            <person name="Palmer S.A."/>
            <person name="Sims S.K."/>
            <person name="Edwards C.A."/>
            <person name="Ashurst J.L."/>
            <person name="Wilming L."/>
            <person name="Jones M.C."/>
            <person name="Horton R."/>
            <person name="Hunt S.E."/>
            <person name="Scott C.E."/>
            <person name="Gilbert J.G.R."/>
            <person name="Clamp M.E."/>
            <person name="Bethel G."/>
            <person name="Milne S."/>
            <person name="Ainscough R."/>
            <person name="Almeida J.P."/>
            <person name="Ambrose K.D."/>
            <person name="Andrews T.D."/>
            <person name="Ashwell R.I.S."/>
            <person name="Babbage A.K."/>
            <person name="Bagguley C.L."/>
            <person name="Bailey J."/>
            <person name="Banerjee R."/>
            <person name="Barker D.J."/>
            <person name="Barlow K.F."/>
            <person name="Bates K."/>
            <person name="Beare D.M."/>
            <person name="Beasley H."/>
            <person name="Beasley O."/>
            <person name="Bird C.P."/>
            <person name="Blakey S.E."/>
            <person name="Bray-Allen S."/>
            <person name="Brook J."/>
            <person name="Brown A.J."/>
            <person name="Brown J.Y."/>
            <person name="Burford D.C."/>
            <person name="Burrill W."/>
            <person name="Burton J."/>
            <person name="Carder C."/>
            <person name="Carter N.P."/>
            <person name="Chapman J.C."/>
            <person name="Clark S.Y."/>
            <person name="Clark G."/>
            <person name="Clee C.M."/>
            <person name="Clegg S."/>
            <person name="Cobley V."/>
            <person name="Collier R.E."/>
            <person name="Collins J.E."/>
            <person name="Colman L.K."/>
            <person name="Corby N.R."/>
            <person name="Coville G.J."/>
            <person name="Culley K.M."/>
            <person name="Dhami P."/>
            <person name="Davies J."/>
            <person name="Dunn M."/>
            <person name="Earthrowl M.E."/>
            <person name="Ellington A.E."/>
            <person name="Evans K.A."/>
            <person name="Faulkner L."/>
            <person name="Francis M.D."/>
            <person name="Frankish A."/>
            <person name="Frankland J."/>
            <person name="French L."/>
            <person name="Garner P."/>
            <person name="Garnett J."/>
            <person name="Ghori M.J."/>
            <person name="Gilby L.M."/>
            <person name="Gillson C.J."/>
            <person name="Glithero R.J."/>
            <person name="Grafham D.V."/>
            <person name="Grant M."/>
            <person name="Gribble S."/>
            <person name="Griffiths C."/>
            <person name="Griffiths M.N.D."/>
            <person name="Hall R."/>
            <person name="Halls K.S."/>
            <person name="Hammond S."/>
            <person name="Harley J.L."/>
            <person name="Hart E.A."/>
            <person name="Heath P.D."/>
            <person name="Heathcott R."/>
            <person name="Holmes S.J."/>
            <person name="Howden P.J."/>
            <person name="Howe K.L."/>
            <person name="Howell G.R."/>
            <person name="Huckle E."/>
            <person name="Humphray S.J."/>
            <person name="Humphries M.D."/>
            <person name="Hunt A.R."/>
            <person name="Johnson C.M."/>
            <person name="Joy A.A."/>
            <person name="Kay M."/>
            <person name="Keenan S.J."/>
            <person name="Kimberley A.M."/>
            <person name="King A."/>
            <person name="Laird G.K."/>
            <person name="Langford C."/>
            <person name="Lawlor S."/>
            <person name="Leongamornlert D.A."/>
            <person name="Leversha M."/>
            <person name="Lloyd C.R."/>
            <person name="Lloyd D.M."/>
            <person name="Loveland J.E."/>
            <person name="Lovell J."/>
            <person name="Martin S."/>
            <person name="Mashreghi-Mohammadi M."/>
            <person name="Maslen G.L."/>
            <person name="Matthews L."/>
            <person name="McCann O.T."/>
            <person name="McLaren S.J."/>
            <person name="McLay K."/>
            <person name="McMurray A."/>
            <person name="Moore M.J.F."/>
            <person name="Mullikin J.C."/>
            <person name="Niblett D."/>
            <person name="Nickerson T."/>
            <person name="Novik K.L."/>
            <person name="Oliver K."/>
            <person name="Overton-Larty E.K."/>
            <person name="Parker A."/>
            <person name="Patel R."/>
            <person name="Pearce A.V."/>
            <person name="Peck A.I."/>
            <person name="Phillimore B.J.C.T."/>
            <person name="Phillips S."/>
            <person name="Plumb R.W."/>
            <person name="Porter K.M."/>
            <person name="Ramsey Y."/>
            <person name="Ranby S.A."/>
            <person name="Rice C.M."/>
            <person name="Ross M.T."/>
            <person name="Searle S.M."/>
            <person name="Sehra H.K."/>
            <person name="Sheridan E."/>
            <person name="Skuce C.D."/>
            <person name="Smith S."/>
            <person name="Smith M."/>
            <person name="Spraggon L."/>
            <person name="Squares S.L."/>
            <person name="Steward C.A."/>
            <person name="Sycamore N."/>
            <person name="Tamlyn-Hall G."/>
            <person name="Tester J."/>
            <person name="Theaker A.J."/>
            <person name="Thomas D.W."/>
            <person name="Thorpe A."/>
            <person name="Tracey A."/>
            <person name="Tromans A."/>
            <person name="Tubby B."/>
            <person name="Wall M."/>
            <person name="Wallis J.M."/>
            <person name="West A.P."/>
            <person name="White S.S."/>
            <person name="Whitehead S.L."/>
            <person name="Whittaker H."/>
            <person name="Wild A."/>
            <person name="Willey D.J."/>
            <person name="Wilmer T.E."/>
            <person name="Wood J.M."/>
            <person name="Wray P.W."/>
            <person name="Wyatt J.C."/>
            <person name="Young L."/>
            <person name="Younger R.M."/>
            <person name="Bentley D.R."/>
            <person name="Coulson A."/>
            <person name="Durbin R.M."/>
            <person name="Hubbard T."/>
            <person name="Sulston J.E."/>
            <person name="Dunham I."/>
            <person name="Rogers J."/>
            <person name="Beck S."/>
        </authorList>
    </citation>
    <scope>NUCLEOTIDE SEQUENCE [LARGE SCALE GENOMIC DNA]</scope>
</reference>
<reference key="3">
    <citation type="journal article" date="2004" name="Genome Res.">
        <title>The status, quality, and expansion of the NIH full-length cDNA project: the Mammalian Gene Collection (MGC).</title>
        <authorList>
            <consortium name="The MGC Project Team"/>
        </authorList>
    </citation>
    <scope>NUCLEOTIDE SEQUENCE [LARGE SCALE MRNA]</scope>
    <scope>VARIANT ARG-161</scope>
    <source>
        <tissue>Blood</tissue>
    </source>
</reference>
<reference key="4">
    <citation type="journal article" date="2001" name="J. Immunol.">
        <title>Identification of a novel cytokine, ML-1, and its expression in subjects with asthma.</title>
        <authorList>
            <person name="Kawaguchi M."/>
            <person name="Onuchic L.F."/>
            <person name="Li X.-D."/>
            <person name="Essayan D.M."/>
            <person name="Schroeder J."/>
            <person name="Xiao H.-Q."/>
            <person name="Liu M.C."/>
            <person name="Krishnaswamy G."/>
            <person name="Germino G."/>
            <person name="Huang S.-K."/>
        </authorList>
    </citation>
    <scope>NUCLEOTIDE SEQUENCE [MRNA] OF 12-163</scope>
    <scope>FUNCTION</scope>
    <scope>TISSUE SPECIFICITY</scope>
</reference>
<reference key="5">
    <citation type="journal article" date="2004" name="Protein Sci.">
        <title>Signal peptide prediction based on analysis of experimentally verified cleavage sites.</title>
        <authorList>
            <person name="Zhang Z."/>
            <person name="Henzel W.J."/>
        </authorList>
    </citation>
    <scope>PROTEIN SEQUENCE OF 31-45</scope>
</reference>
<reference key="6">
    <citation type="journal article" date="2007" name="J. Biol. Chem.">
        <title>Identification of an interleukin 17F/17A heterodimer in activated human CD4+ T cells.</title>
        <authorList>
            <person name="Wright J.F."/>
            <person name="Guo Y."/>
            <person name="Quazi A."/>
            <person name="Luxenberg D.P."/>
            <person name="Bennett F."/>
            <person name="Ross J.F."/>
            <person name="Qiu Y."/>
            <person name="Whitters M.J."/>
            <person name="Tomkinson K.N."/>
            <person name="Dunussi-Joannopoulos K."/>
            <person name="Carreno B.M."/>
            <person name="Collins M."/>
            <person name="Wolfman N.M."/>
        </authorList>
    </citation>
    <scope>SUBUNIT</scope>
</reference>
<reference key="7">
    <citation type="journal article" date="2007" name="J. Immunol.">
        <title>Identification of the IL-17 receptor related molecule IL-17RC as the receptor for IL-17F.</title>
        <authorList>
            <person name="Kuestner R.E."/>
            <person name="Taft D.W."/>
            <person name="Haran A."/>
            <person name="Brandt C.S."/>
            <person name="Brender T."/>
            <person name="Lum K."/>
            <person name="Harder B."/>
            <person name="Okada S."/>
            <person name="Ostrander C.D."/>
            <person name="Kreindler J.L."/>
            <person name="Aujla S.J."/>
            <person name="Reardon B."/>
            <person name="Moore M."/>
            <person name="Shea P."/>
            <person name="Schreckhise R."/>
            <person name="Bukowski T.R."/>
            <person name="Presnell S."/>
            <person name="Guerra-Lewis P."/>
            <person name="Parrish-Novak J."/>
            <person name="Ellsworth J.L."/>
            <person name="Jaspers S."/>
            <person name="Lewis K.E."/>
            <person name="Appleby M."/>
            <person name="Kolls J.K."/>
            <person name="Rixon M."/>
            <person name="West J.W."/>
            <person name="Gao Z."/>
            <person name="Levin S.D."/>
        </authorList>
    </citation>
    <scope>FUNCTION</scope>
    <scope>INTERACTION WITH IL17RC</scope>
</reference>
<reference key="8">
    <citation type="journal article" date="2008" name="J. Immunol.">
        <title>The human IL-17F/IL-17A heterodimeric cytokine signals through the IL-17RA/IL-17RC receptor complex.</title>
        <authorList>
            <person name="Wright J.F."/>
            <person name="Bennett F."/>
            <person name="Li B."/>
            <person name="Brooks J."/>
            <person name="Luxenberg D.P."/>
            <person name="Whitters M.J."/>
            <person name="Tomkinson K.N."/>
            <person name="Fitz L.J."/>
            <person name="Wolfman N.M."/>
            <person name="Collins M."/>
            <person name="Dunussi-Joannopoulos K."/>
            <person name="Chatterjee-Kishore M."/>
            <person name="Carreno B.M."/>
        </authorList>
    </citation>
    <scope>FUNCTION</scope>
    <scope>INTERACTION WITH IL17RA AND IL17RC</scope>
</reference>
<reference key="9">
    <citation type="journal article" date="2001" name="EMBO J.">
        <title>IL-17s adopt a cystine knot fold: structure and activity of a novel cytokine, IL-17F, and implications for receptor binding.</title>
        <authorList>
            <person name="Hymowitz S.G."/>
            <person name="Filvaroff E.H."/>
            <person name="Yin J.P."/>
            <person name="Lee J."/>
            <person name="Cai L."/>
            <person name="Risser P."/>
            <person name="Maruoka M."/>
            <person name="Mao W."/>
            <person name="Foster J."/>
            <person name="Kelley R.F."/>
            <person name="Pan G."/>
            <person name="Gurney A.L."/>
            <person name="de Vos A.M."/>
            <person name="Starovasnik M.A."/>
        </authorList>
    </citation>
    <scope>X-RAY CRYSTALLOGRAPHY (2.85 ANGSTROMS)</scope>
    <scope>FUNCTION</scope>
</reference>
<reference key="10">
    <citation type="journal article" date="2009" name="Nat. Immunol.">
        <title>Structural basis of receptor sharing by interleukin 17 cytokines.</title>
        <authorList>
            <person name="Ely L.K."/>
            <person name="Fischer S."/>
            <person name="Garcia K.C."/>
        </authorList>
    </citation>
    <scope>X-RAY CRYSTALLOGRAPHY (3.3 ANGSTROMS) OF 31-163 IN COMPLEX WITH IL17R</scope>
    <scope>GLYCOSYLATION AT ASN-83</scope>
    <scope>SUBUNIT</scope>
    <scope>DISULFIDE BONDS</scope>
</reference>
<reference key="11">
    <citation type="journal article" date="2017" name="Sci. Rep.">
        <title>The human IL-17A/F heterodimer: a two-faced cytokine with unique receptor recognition properties.</title>
        <authorList>
            <person name="Goepfert A."/>
            <person name="Lehmann S."/>
            <person name="Wirth E."/>
            <person name="Rondeau J.M."/>
        </authorList>
    </citation>
    <scope>X-RAY CRYSTALLOGRAPHY (2.30 ANGSTROMS) OF 31-163 IN COMPLEX WITH IL17A; INTERACTION WITH IL17RA AND IL17RC</scope>
    <scope>FUNCTION</scope>
    <scope>MUTAGENESIS OF ARG-77</scope>
</reference>
<reference key="12">
    <citation type="journal article" date="2020" name="Immunity">
        <title>Structural Analysis Reveals that the Cytokine IL-17F Forms a Homodimeric Complex with Receptor IL-17RC to Drive IL-17RA-Independent Signaling.</title>
        <authorList>
            <person name="Goepfert A."/>
            <person name="Lehmann S."/>
            <person name="Blank J."/>
            <person name="Kolbinger F."/>
            <person name="Rondeau J.M."/>
        </authorList>
    </citation>
    <scope>X-RAY CRYSTALLOGRAPHY (3.32 ANGSTROMS) OF 31-163 IN COMPLEX WITH IL17RC</scope>
    <scope>DISULFIDE BOND</scope>
    <scope>INTERACTION WITH IL17A; IL17RC AND IL17RA</scope>
    <scope>FUNCTION</scope>
</reference>
<reference key="13">
    <citation type="journal article" date="2011" name="Science">
        <title>Chronic mucocutaneous candidiasis in humans with inborn errors of interleukin-17 immunity.</title>
        <authorList>
            <person name="Puel A."/>
            <person name="Cypowyj S."/>
            <person name="Bustamante J."/>
            <person name="Wright J.F."/>
            <person name="Liu L."/>
            <person name="Lim H.K."/>
            <person name="Migaud M."/>
            <person name="Israel L."/>
            <person name="Chrabieh M."/>
            <person name="Audry M."/>
            <person name="Gumbleton M."/>
            <person name="Toulon A."/>
            <person name="Bodemer C."/>
            <person name="El-Baghdadi J."/>
            <person name="Whitters M."/>
            <person name="Paradis T."/>
            <person name="Brooks J."/>
            <person name="Collins M."/>
            <person name="Wolfman N.M."/>
            <person name="Al-Muhsen S."/>
            <person name="Galicchio M."/>
            <person name="Abel L."/>
            <person name="Picard C."/>
            <person name="Casanova J.L."/>
        </authorList>
    </citation>
    <scope>VARIANT CANDF6 LEU-95</scope>
    <scope>FUNCTION</scope>
</reference>
<gene>
    <name type="primary">IL17F</name>
</gene>
<feature type="signal peptide" evidence="5">
    <location>
        <begin position="1"/>
        <end position="30"/>
    </location>
</feature>
<feature type="chain" id="PRO_0000015432" description="Interleukin-17F">
    <location>
        <begin position="31"/>
        <end position="163"/>
    </location>
</feature>
<feature type="glycosylation site" description="N-linked (GlcNAc...) asparagine" evidence="10">
    <location>
        <position position="83"/>
    </location>
</feature>
<feature type="disulfide bond" description="Interchain (with C-137)" evidence="10">
    <location>
        <position position="47"/>
    </location>
</feature>
<feature type="disulfide bond" evidence="10 13">
    <location>
        <begin position="102"/>
        <end position="152"/>
    </location>
</feature>
<feature type="disulfide bond" evidence="10 13">
    <location>
        <begin position="107"/>
        <end position="154"/>
    </location>
</feature>
<feature type="disulfide bond" description="Interchain (with C-47)" evidence="10">
    <location>
        <position position="137"/>
    </location>
</feature>
<feature type="sequence variant" id="VAR_065813" description="In CANDF6; dbSNP:rs748486078." evidence="11">
    <original>S</original>
    <variation>L</variation>
    <location>
        <position position="95"/>
    </location>
</feature>
<feature type="sequence variant" id="VAR_058287" description="In dbSNP:rs2397084.">
    <original>E</original>
    <variation>G</variation>
    <location>
        <position position="126"/>
    </location>
</feature>
<feature type="sequence variant" id="VAR_058288" description="In dbSNP:rs11465553.">
    <original>V</original>
    <variation>I</variation>
    <location>
        <position position="155"/>
    </location>
</feature>
<feature type="sequence variant" id="VAR_058289" description="In dbSNP:rs763780." evidence="6">
    <original>H</original>
    <variation>R</variation>
    <location>
        <position position="161"/>
    </location>
</feature>
<feature type="mutagenesis site" description="Significantly decreases the affinity for IL17RA and IL17RC by nearly 5-fold and 200-fold, respectively." evidence="12">
    <original>R</original>
    <variation>A</variation>
    <location>
        <position position="77"/>
    </location>
</feature>
<feature type="helix" evidence="15">
    <location>
        <begin position="39"/>
        <end position="41"/>
    </location>
</feature>
<feature type="strand" evidence="18">
    <location>
        <begin position="55"/>
        <end position="62"/>
    </location>
</feature>
<feature type="turn" evidence="18">
    <location>
        <begin position="63"/>
        <end position="65"/>
    </location>
</feature>
<feature type="turn" evidence="17">
    <location>
        <begin position="68"/>
        <end position="71"/>
    </location>
</feature>
<feature type="helix" evidence="18">
    <location>
        <begin position="74"/>
        <end position="77"/>
    </location>
</feature>
<feature type="strand" evidence="18">
    <location>
        <begin position="78"/>
        <end position="80"/>
    </location>
</feature>
<feature type="strand" evidence="18">
    <location>
        <begin position="82"/>
        <end position="88"/>
    </location>
</feature>
<feature type="strand" evidence="18">
    <location>
        <begin position="92"/>
        <end position="103"/>
    </location>
</feature>
<feature type="strand" evidence="18">
    <location>
        <begin position="105"/>
        <end position="108"/>
    </location>
</feature>
<feature type="strand" evidence="17">
    <location>
        <begin position="110"/>
        <end position="112"/>
    </location>
</feature>
<feature type="strand" evidence="18">
    <location>
        <begin position="118"/>
        <end position="134"/>
    </location>
</feature>
<feature type="helix" evidence="18">
    <location>
        <begin position="136"/>
        <end position="138"/>
    </location>
</feature>
<feature type="strand" evidence="18">
    <location>
        <begin position="140"/>
        <end position="155"/>
    </location>
</feature>
<feature type="strand" evidence="16">
    <location>
        <begin position="159"/>
        <end position="161"/>
    </location>
</feature>
<sequence>MTVKTLHGPAMVKYLLLSILGLAFLSEAAARKIPKVGHTFFQKPESCPPVPGGSMKLDIGIINENQRVSMSRNIESRSTSPWNYTVTWDPNRYPSEVVQAQCRNLGCINAQGKEDISMNSVPIQQETLVVRRKHQGCSVSFQLEKVLVTVGCTCVTPVIHHVQ</sequence>
<keyword id="KW-0002">3D-structure</keyword>
<keyword id="KW-1064">Adaptive immunity</keyword>
<keyword id="KW-0202">Cytokine</keyword>
<keyword id="KW-0903">Direct protein sequencing</keyword>
<keyword id="KW-0225">Disease variant</keyword>
<keyword id="KW-1015">Disulfide bond</keyword>
<keyword id="KW-0325">Glycoprotein</keyword>
<keyword id="KW-0391">Immunity</keyword>
<keyword id="KW-0395">Inflammatory response</keyword>
<keyword id="KW-0399">Innate immunity</keyword>
<keyword id="KW-1267">Proteomics identification</keyword>
<keyword id="KW-1185">Reference proteome</keyword>
<keyword id="KW-0964">Secreted</keyword>
<keyword id="KW-0732">Signal</keyword>
<proteinExistence type="evidence at protein level"/>
<evidence type="ECO:0000250" key="1">
    <source>
        <dbReference type="UniProtKB" id="Q7TNI7"/>
    </source>
</evidence>
<evidence type="ECO:0000269" key="2">
    <source>
    </source>
</evidence>
<evidence type="ECO:0000269" key="3">
    <source>
    </source>
</evidence>
<evidence type="ECO:0000269" key="4">
    <source>
    </source>
</evidence>
<evidence type="ECO:0000269" key="5">
    <source>
    </source>
</evidence>
<evidence type="ECO:0000269" key="6">
    <source>
    </source>
</evidence>
<evidence type="ECO:0000269" key="7">
    <source>
    </source>
</evidence>
<evidence type="ECO:0000269" key="8">
    <source>
    </source>
</evidence>
<evidence type="ECO:0000269" key="9">
    <source>
    </source>
</evidence>
<evidence type="ECO:0000269" key="10">
    <source>
    </source>
</evidence>
<evidence type="ECO:0000269" key="11">
    <source>
    </source>
</evidence>
<evidence type="ECO:0000269" key="12">
    <source>
    </source>
</evidence>
<evidence type="ECO:0000269" key="13">
    <source>
    </source>
</evidence>
<evidence type="ECO:0000305" key="14"/>
<evidence type="ECO:0007829" key="15">
    <source>
        <dbReference type="PDB" id="1JPY"/>
    </source>
</evidence>
<evidence type="ECO:0007829" key="16">
    <source>
        <dbReference type="PDB" id="3JVF"/>
    </source>
</evidence>
<evidence type="ECO:0007829" key="17">
    <source>
        <dbReference type="PDB" id="5N92"/>
    </source>
</evidence>
<evidence type="ECO:0007829" key="18">
    <source>
        <dbReference type="PDB" id="6HGO"/>
    </source>
</evidence>
<name>IL17F_HUMAN</name>
<organism>
    <name type="scientific">Homo sapiens</name>
    <name type="common">Human</name>
    <dbReference type="NCBI Taxonomy" id="9606"/>
    <lineage>
        <taxon>Eukaryota</taxon>
        <taxon>Metazoa</taxon>
        <taxon>Chordata</taxon>
        <taxon>Craniata</taxon>
        <taxon>Vertebrata</taxon>
        <taxon>Euteleostomi</taxon>
        <taxon>Mammalia</taxon>
        <taxon>Eutheria</taxon>
        <taxon>Euarchontoglires</taxon>
        <taxon>Primates</taxon>
        <taxon>Haplorrhini</taxon>
        <taxon>Catarrhini</taxon>
        <taxon>Hominidae</taxon>
        <taxon>Homo</taxon>
    </lineage>
</organism>
<dbReference type="EMBL" id="AF384857">
    <property type="protein sequence ID" value="AAK83350.1"/>
    <property type="molecule type" value="mRNA"/>
</dbReference>
<dbReference type="EMBL" id="AL034343">
    <property type="status" value="NOT_ANNOTATED_CDS"/>
    <property type="molecule type" value="Genomic_DNA"/>
</dbReference>
<dbReference type="EMBL" id="BC070124">
    <property type="protein sequence ID" value="AAH70124.1"/>
    <property type="molecule type" value="mRNA"/>
</dbReference>
<dbReference type="EMBL" id="AF332389">
    <property type="protein sequence ID" value="AAL14427.1"/>
    <property type="status" value="ALT_SEQ"/>
    <property type="molecule type" value="mRNA"/>
</dbReference>
<dbReference type="CCDS" id="CCDS4938.1"/>
<dbReference type="RefSeq" id="NP_443104.1">
    <property type="nucleotide sequence ID" value="NM_052872.4"/>
</dbReference>
<dbReference type="RefSeq" id="XP_011512578.1">
    <property type="nucleotide sequence ID" value="XM_011514276.1"/>
</dbReference>
<dbReference type="RefSeq" id="XP_054210117.1">
    <property type="nucleotide sequence ID" value="XM_054354142.1"/>
</dbReference>
<dbReference type="PDB" id="1JPY">
    <property type="method" value="X-ray"/>
    <property type="resolution" value="2.85 A"/>
    <property type="chains" value="A/B/X/Y=31-163"/>
</dbReference>
<dbReference type="PDB" id="3JVF">
    <property type="method" value="X-ray"/>
    <property type="resolution" value="3.30 A"/>
    <property type="chains" value="A/B=31-163"/>
</dbReference>
<dbReference type="PDB" id="5N92">
    <property type="method" value="X-ray"/>
    <property type="resolution" value="2.30 A"/>
    <property type="chains" value="F=31-163"/>
</dbReference>
<dbReference type="PDB" id="5NAN">
    <property type="method" value="X-ray"/>
    <property type="resolution" value="3.30 A"/>
    <property type="chains" value="E/F=31-163"/>
</dbReference>
<dbReference type="PDB" id="6HG4">
    <property type="method" value="X-ray"/>
    <property type="resolution" value="3.32 A"/>
    <property type="chains" value="A=31-163"/>
</dbReference>
<dbReference type="PDB" id="6HG9">
    <property type="method" value="X-ray"/>
    <property type="resolution" value="3.62 A"/>
    <property type="chains" value="A=31-163"/>
</dbReference>
<dbReference type="PDB" id="6HGO">
    <property type="method" value="X-ray"/>
    <property type="resolution" value="2.10 A"/>
    <property type="chains" value="A/B/C/D=31-163"/>
</dbReference>
<dbReference type="PDB" id="6PPG">
    <property type="method" value="X-ray"/>
    <property type="resolution" value="2.75 A"/>
    <property type="chains" value="F/G=31-163"/>
</dbReference>
<dbReference type="PDB" id="8RUU">
    <property type="method" value="X-ray"/>
    <property type="resolution" value="2.81 A"/>
    <property type="chains" value="X/Y=31-163"/>
</dbReference>
<dbReference type="PDBsum" id="1JPY"/>
<dbReference type="PDBsum" id="3JVF"/>
<dbReference type="PDBsum" id="5N92"/>
<dbReference type="PDBsum" id="5NAN"/>
<dbReference type="PDBsum" id="6HG4"/>
<dbReference type="PDBsum" id="6HG9"/>
<dbReference type="PDBsum" id="6HGO"/>
<dbReference type="PDBsum" id="6PPG"/>
<dbReference type="PDBsum" id="8RUU"/>
<dbReference type="SMR" id="Q96PD4"/>
<dbReference type="BioGRID" id="125201">
    <property type="interactions" value="32"/>
</dbReference>
<dbReference type="ComplexPortal" id="CPX-8776">
    <property type="entry name" value="Interleukin-17A-F receptor-ligand complex"/>
</dbReference>
<dbReference type="ComplexPortal" id="CPX-9202">
    <property type="entry name" value="Interleukin-17F receptor-ligand complex"/>
</dbReference>
<dbReference type="ComplexPortal" id="CPX-9303">
    <property type="entry name" value="Interleukin-17F complex"/>
</dbReference>
<dbReference type="ComplexPortal" id="CPX-9307">
    <property type="entry name" value="Interleukin-17A-F complex"/>
</dbReference>
<dbReference type="CORUM" id="Q96PD4"/>
<dbReference type="FunCoup" id="Q96PD4">
    <property type="interactions" value="437"/>
</dbReference>
<dbReference type="IntAct" id="Q96PD4">
    <property type="interactions" value="28"/>
</dbReference>
<dbReference type="STRING" id="9606.ENSP00000337432"/>
<dbReference type="BindingDB" id="Q96PD4"/>
<dbReference type="ChEMBL" id="CHEMBL4630880"/>
<dbReference type="DrugBank" id="DB12917">
    <property type="generic name" value="Bimekizumab"/>
</dbReference>
<dbReference type="DrugCentral" id="Q96PD4"/>
<dbReference type="GlyCosmos" id="Q96PD4">
    <property type="glycosylation" value="1 site, No reported glycans"/>
</dbReference>
<dbReference type="GlyGen" id="Q96PD4">
    <property type="glycosylation" value="1 site"/>
</dbReference>
<dbReference type="iPTMnet" id="Q96PD4"/>
<dbReference type="PhosphoSitePlus" id="Q96PD4"/>
<dbReference type="BioMuta" id="IL17F"/>
<dbReference type="DMDM" id="239938888"/>
<dbReference type="MassIVE" id="Q96PD4"/>
<dbReference type="PaxDb" id="9606-ENSP00000337432"/>
<dbReference type="PeptideAtlas" id="Q96PD4"/>
<dbReference type="ProteomicsDB" id="77668"/>
<dbReference type="ABCD" id="Q96PD4">
    <property type="antibodies" value="56 sequenced antibodies"/>
</dbReference>
<dbReference type="Antibodypedia" id="30885">
    <property type="antibodies" value="919 antibodies from 42 providers"/>
</dbReference>
<dbReference type="DNASU" id="112744"/>
<dbReference type="Ensembl" id="ENST00000336123.5">
    <property type="protein sequence ID" value="ENSP00000337432.4"/>
    <property type="gene ID" value="ENSG00000112116.11"/>
</dbReference>
<dbReference type="Ensembl" id="ENST00000699946.1">
    <property type="protein sequence ID" value="ENSP00000514702.1"/>
    <property type="gene ID" value="ENSG00000112116.11"/>
</dbReference>
<dbReference type="GeneID" id="112744"/>
<dbReference type="KEGG" id="hsa:112744"/>
<dbReference type="MANE-Select" id="ENST00000336123.5">
    <property type="protein sequence ID" value="ENSP00000337432.4"/>
    <property type="RefSeq nucleotide sequence ID" value="NM_052872.4"/>
    <property type="RefSeq protein sequence ID" value="NP_443104.1"/>
</dbReference>
<dbReference type="UCSC" id="uc003pam.2">
    <property type="organism name" value="human"/>
</dbReference>
<dbReference type="AGR" id="HGNC:16404"/>
<dbReference type="CTD" id="112744"/>
<dbReference type="DisGeNET" id="112744"/>
<dbReference type="GeneCards" id="IL17F"/>
<dbReference type="HGNC" id="HGNC:16404">
    <property type="gene designation" value="IL17F"/>
</dbReference>
<dbReference type="HPA" id="ENSG00000112116">
    <property type="expression patterns" value="Tissue enhanced (lymphoid)"/>
</dbReference>
<dbReference type="MalaCards" id="IL17F"/>
<dbReference type="MIM" id="606496">
    <property type="type" value="gene"/>
</dbReference>
<dbReference type="MIM" id="613956">
    <property type="type" value="phenotype"/>
</dbReference>
<dbReference type="neXtProt" id="NX_Q96PD4"/>
<dbReference type="OpenTargets" id="ENSG00000112116"/>
<dbReference type="Orphanet" id="1334">
    <property type="disease" value="Chronic mucocutaneous candidiasis"/>
</dbReference>
<dbReference type="PharmGKB" id="PA29800"/>
<dbReference type="VEuPathDB" id="HostDB:ENSG00000112116"/>
<dbReference type="eggNOG" id="ENOG502S5A0">
    <property type="taxonomic scope" value="Eukaryota"/>
</dbReference>
<dbReference type="GeneTree" id="ENSGT00940000156618"/>
<dbReference type="HOGENOM" id="CLU_118641_0_0_1"/>
<dbReference type="InParanoid" id="Q96PD4"/>
<dbReference type="OMA" id="SPWDYNV"/>
<dbReference type="OrthoDB" id="6093351at2759"/>
<dbReference type="PAN-GO" id="Q96PD4">
    <property type="GO annotations" value="2 GO annotations based on evolutionary models"/>
</dbReference>
<dbReference type="PhylomeDB" id="Q96PD4"/>
<dbReference type="TreeFam" id="TF314701"/>
<dbReference type="PathwayCommons" id="Q96PD4"/>
<dbReference type="Reactome" id="R-HSA-448424">
    <property type="pathway name" value="Interleukin-17 signaling"/>
</dbReference>
<dbReference type="Reactome" id="R-HSA-6785807">
    <property type="pathway name" value="Interleukin-4 and Interleukin-13 signaling"/>
</dbReference>
<dbReference type="Reactome" id="R-HSA-9705671">
    <property type="pathway name" value="SARS-CoV-2 activates/modulates innate and adaptive immune responses"/>
</dbReference>
<dbReference type="SignaLink" id="Q96PD4"/>
<dbReference type="BioGRID-ORCS" id="112744">
    <property type="hits" value="13 hits in 1134 CRISPR screens"/>
</dbReference>
<dbReference type="EvolutionaryTrace" id="Q96PD4"/>
<dbReference type="GenomeRNAi" id="112744"/>
<dbReference type="Pharos" id="Q96PD4">
    <property type="development level" value="Tclin"/>
</dbReference>
<dbReference type="PRO" id="PR:Q96PD4"/>
<dbReference type="Proteomes" id="UP000005640">
    <property type="component" value="Chromosome 6"/>
</dbReference>
<dbReference type="RNAct" id="Q96PD4">
    <property type="molecule type" value="protein"/>
</dbReference>
<dbReference type="Bgee" id="ENSG00000112116">
    <property type="expression patterns" value="Expressed in male germ line stem cell (sensu Vertebrata) in testis and 36 other cell types or tissues"/>
</dbReference>
<dbReference type="GO" id="GO:0005576">
    <property type="term" value="C:extracellular region"/>
    <property type="evidence" value="ECO:0000304"/>
    <property type="project" value="Reactome"/>
</dbReference>
<dbReference type="GO" id="GO:0005615">
    <property type="term" value="C:extracellular space"/>
    <property type="evidence" value="ECO:0007669"/>
    <property type="project" value="UniProtKB-KW"/>
</dbReference>
<dbReference type="GO" id="GO:0005125">
    <property type="term" value="F:cytokine activity"/>
    <property type="evidence" value="ECO:0000314"/>
    <property type="project" value="UniProtKB"/>
</dbReference>
<dbReference type="GO" id="GO:0019955">
    <property type="term" value="F:cytokine binding"/>
    <property type="evidence" value="ECO:0000314"/>
    <property type="project" value="UniProtKB"/>
</dbReference>
<dbReference type="GO" id="GO:0005126">
    <property type="term" value="F:cytokine receptor binding"/>
    <property type="evidence" value="ECO:0007669"/>
    <property type="project" value="Ensembl"/>
</dbReference>
<dbReference type="GO" id="GO:0046982">
    <property type="term" value="F:protein heterodimerization activity"/>
    <property type="evidence" value="ECO:0007669"/>
    <property type="project" value="Ensembl"/>
</dbReference>
<dbReference type="GO" id="GO:0042803">
    <property type="term" value="F:protein homodimerization activity"/>
    <property type="evidence" value="ECO:0000314"/>
    <property type="project" value="UniProtKB"/>
</dbReference>
<dbReference type="GO" id="GO:0002250">
    <property type="term" value="P:adaptive immune response"/>
    <property type="evidence" value="ECO:0007669"/>
    <property type="project" value="UniProtKB-KW"/>
</dbReference>
<dbReference type="GO" id="GO:0051216">
    <property type="term" value="P:cartilage development"/>
    <property type="evidence" value="ECO:0000314"/>
    <property type="project" value="UniProtKB"/>
</dbReference>
<dbReference type="GO" id="GO:0050829">
    <property type="term" value="P:defense response to Gram-negative bacterium"/>
    <property type="evidence" value="ECO:0007669"/>
    <property type="project" value="Ensembl"/>
</dbReference>
<dbReference type="GO" id="GO:0050830">
    <property type="term" value="P:defense response to Gram-positive bacterium"/>
    <property type="evidence" value="ECO:0007669"/>
    <property type="project" value="Ensembl"/>
</dbReference>
<dbReference type="GO" id="GO:0006954">
    <property type="term" value="P:inflammatory response"/>
    <property type="evidence" value="ECO:0007669"/>
    <property type="project" value="UniProtKB-KW"/>
</dbReference>
<dbReference type="GO" id="GO:0045087">
    <property type="term" value="P:innate immune response"/>
    <property type="evidence" value="ECO:0007669"/>
    <property type="project" value="UniProtKB-KW"/>
</dbReference>
<dbReference type="GO" id="GO:0097400">
    <property type="term" value="P:interleukin-17-mediated signaling pathway"/>
    <property type="evidence" value="ECO:0000314"/>
    <property type="project" value="UniProtKB"/>
</dbReference>
<dbReference type="GO" id="GO:0016525">
    <property type="term" value="P:negative regulation of angiogenesis"/>
    <property type="evidence" value="ECO:0000314"/>
    <property type="project" value="UniProtKB"/>
</dbReference>
<dbReference type="GO" id="GO:0002225">
    <property type="term" value="P:positive regulation of antimicrobial peptide production"/>
    <property type="evidence" value="ECO:0007669"/>
    <property type="project" value="Ensembl"/>
</dbReference>
<dbReference type="GO" id="GO:2000340">
    <property type="term" value="P:positive regulation of chemokine (C-X-C motif) ligand 1 production"/>
    <property type="evidence" value="ECO:0000314"/>
    <property type="project" value="UniProtKB"/>
</dbReference>
<dbReference type="GO" id="GO:0001819">
    <property type="term" value="P:positive regulation of cytokine production"/>
    <property type="evidence" value="ECO:0000314"/>
    <property type="project" value="UniProtKB"/>
</dbReference>
<dbReference type="GO" id="GO:1900017">
    <property type="term" value="P:positive regulation of cytokine production involved in inflammatory response"/>
    <property type="evidence" value="ECO:0007669"/>
    <property type="project" value="Ensembl"/>
</dbReference>
<dbReference type="GO" id="GO:0032755">
    <property type="term" value="P:positive regulation of interleukin-6 production"/>
    <property type="evidence" value="ECO:0000314"/>
    <property type="project" value="UniProtKB"/>
</dbReference>
<dbReference type="GO" id="GO:0032761">
    <property type="term" value="P:positive regulation of lymphotoxin A production"/>
    <property type="evidence" value="ECO:0000314"/>
    <property type="project" value="UniProtKB"/>
</dbReference>
<dbReference type="GO" id="GO:0045944">
    <property type="term" value="P:positive regulation of transcription by RNA polymerase II"/>
    <property type="evidence" value="ECO:0007669"/>
    <property type="project" value="Ensembl"/>
</dbReference>
<dbReference type="GO" id="GO:0032645">
    <property type="term" value="P:regulation of granulocyte macrophage colony-stimulating factor production"/>
    <property type="evidence" value="ECO:0000314"/>
    <property type="project" value="UniProtKB"/>
</dbReference>
<dbReference type="GO" id="GO:0032663">
    <property type="term" value="P:regulation of interleukin-2 production"/>
    <property type="evidence" value="ECO:0000314"/>
    <property type="project" value="UniProtKB"/>
</dbReference>
<dbReference type="GO" id="GO:0032675">
    <property type="term" value="P:regulation of interleukin-6 production"/>
    <property type="evidence" value="ECO:0000314"/>
    <property type="project" value="UniProtKB"/>
</dbReference>
<dbReference type="GO" id="GO:0032677">
    <property type="term" value="P:regulation of interleukin-8 production"/>
    <property type="evidence" value="ECO:0000314"/>
    <property type="project" value="UniProtKB"/>
</dbReference>
<dbReference type="GO" id="GO:0017015">
    <property type="term" value="P:regulation of transforming growth factor beta receptor signaling pathway"/>
    <property type="evidence" value="ECO:0000314"/>
    <property type="project" value="UniProtKB"/>
</dbReference>
<dbReference type="FunFam" id="2.10.90.10:FF:000038">
    <property type="entry name" value="Interleukin-17A"/>
    <property type="match status" value="1"/>
</dbReference>
<dbReference type="Gene3D" id="2.10.90.10">
    <property type="entry name" value="Cystine-knot cytokines"/>
    <property type="match status" value="1"/>
</dbReference>
<dbReference type="InterPro" id="IPR029034">
    <property type="entry name" value="Cystine-knot_cytokine"/>
</dbReference>
<dbReference type="InterPro" id="IPR020440">
    <property type="entry name" value="IL-17_chr"/>
</dbReference>
<dbReference type="InterPro" id="IPR010345">
    <property type="entry name" value="IL-17_fam"/>
</dbReference>
<dbReference type="Pfam" id="PF06083">
    <property type="entry name" value="IL17"/>
    <property type="match status" value="1"/>
</dbReference>
<dbReference type="PRINTS" id="PR01932">
    <property type="entry name" value="INTRLEUKIN17"/>
</dbReference>
<dbReference type="SUPFAM" id="SSF57501">
    <property type="entry name" value="Cystine-knot cytokines"/>
    <property type="match status" value="1"/>
</dbReference>